<accession>B7KUS7</accession>
<organism>
    <name type="scientific">Methylorubrum extorquens (strain CM4 / NCIMB 13688)</name>
    <name type="common">Methylobacterium extorquens</name>
    <dbReference type="NCBI Taxonomy" id="440085"/>
    <lineage>
        <taxon>Bacteria</taxon>
        <taxon>Pseudomonadati</taxon>
        <taxon>Pseudomonadota</taxon>
        <taxon>Alphaproteobacteria</taxon>
        <taxon>Hyphomicrobiales</taxon>
        <taxon>Methylobacteriaceae</taxon>
        <taxon>Methylorubrum</taxon>
    </lineage>
</organism>
<comment type="function">
    <text evidence="1">Catalyzes the formation of 6,7-dimethyl-8-ribityllumazine by condensation of 5-amino-6-(D-ribitylamino)uracil with 3,4-dihydroxy-2-butanone 4-phosphate. This is the penultimate step in the biosynthesis of riboflavin.</text>
</comment>
<comment type="catalytic activity">
    <reaction evidence="1">
        <text>(2S)-2-hydroxy-3-oxobutyl phosphate + 5-amino-6-(D-ribitylamino)uracil = 6,7-dimethyl-8-(1-D-ribityl)lumazine + phosphate + 2 H2O + H(+)</text>
        <dbReference type="Rhea" id="RHEA:26152"/>
        <dbReference type="ChEBI" id="CHEBI:15377"/>
        <dbReference type="ChEBI" id="CHEBI:15378"/>
        <dbReference type="ChEBI" id="CHEBI:15934"/>
        <dbReference type="ChEBI" id="CHEBI:43474"/>
        <dbReference type="ChEBI" id="CHEBI:58201"/>
        <dbReference type="ChEBI" id="CHEBI:58830"/>
        <dbReference type="EC" id="2.5.1.78"/>
    </reaction>
</comment>
<comment type="pathway">
    <text evidence="1">Cofactor biosynthesis; riboflavin biosynthesis; riboflavin from 2-hydroxy-3-oxobutyl phosphate and 5-amino-6-(D-ribitylamino)uracil: step 1/2.</text>
</comment>
<comment type="similarity">
    <text evidence="1">Belongs to the DMRL synthase family.</text>
</comment>
<protein>
    <recommendedName>
        <fullName evidence="1">6,7-dimethyl-8-ribityllumazine synthase</fullName>
        <shortName evidence="1">DMRL synthase</shortName>
        <shortName evidence="1">LS</shortName>
        <shortName evidence="1">Lumazine synthase</shortName>
        <ecNumber evidence="1">2.5.1.78</ecNumber>
    </recommendedName>
</protein>
<gene>
    <name evidence="1" type="primary">ribH</name>
    <name type="ordered locus">Mchl_3486</name>
</gene>
<name>RISB_METC4</name>
<keyword id="KW-0686">Riboflavin biosynthesis</keyword>
<keyword id="KW-0808">Transferase</keyword>
<proteinExistence type="inferred from homology"/>
<reference key="1">
    <citation type="submission" date="2008-12" db="EMBL/GenBank/DDBJ databases">
        <title>Complete sequence of chromosome of Methylobacterium chloromethanicum CM4.</title>
        <authorList>
            <consortium name="US DOE Joint Genome Institute"/>
            <person name="Lucas S."/>
            <person name="Copeland A."/>
            <person name="Lapidus A."/>
            <person name="Glavina del Rio T."/>
            <person name="Dalin E."/>
            <person name="Tice H."/>
            <person name="Bruce D."/>
            <person name="Goodwin L."/>
            <person name="Pitluck S."/>
            <person name="Chertkov O."/>
            <person name="Brettin T."/>
            <person name="Detter J.C."/>
            <person name="Han C."/>
            <person name="Larimer F."/>
            <person name="Land M."/>
            <person name="Hauser L."/>
            <person name="Kyrpides N."/>
            <person name="Mikhailova N."/>
            <person name="Marx C."/>
            <person name="Richardson P."/>
        </authorList>
    </citation>
    <scope>NUCLEOTIDE SEQUENCE [LARGE SCALE GENOMIC DNA]</scope>
    <source>
        <strain>CM4 / NCIMB 13688</strain>
    </source>
</reference>
<dbReference type="EC" id="2.5.1.78" evidence="1"/>
<dbReference type="EMBL" id="CP001298">
    <property type="protein sequence ID" value="ACK84306.1"/>
    <property type="molecule type" value="Genomic_DNA"/>
</dbReference>
<dbReference type="RefSeq" id="WP_003605626.1">
    <property type="nucleotide sequence ID" value="NC_011757.1"/>
</dbReference>
<dbReference type="SMR" id="B7KUS7"/>
<dbReference type="GeneID" id="72990808"/>
<dbReference type="KEGG" id="mch:Mchl_3486"/>
<dbReference type="HOGENOM" id="CLU_089358_1_2_5"/>
<dbReference type="UniPathway" id="UPA00275">
    <property type="reaction ID" value="UER00404"/>
</dbReference>
<dbReference type="Proteomes" id="UP000002385">
    <property type="component" value="Chromosome"/>
</dbReference>
<dbReference type="GO" id="GO:0005829">
    <property type="term" value="C:cytosol"/>
    <property type="evidence" value="ECO:0007669"/>
    <property type="project" value="TreeGrafter"/>
</dbReference>
<dbReference type="GO" id="GO:0009349">
    <property type="term" value="C:riboflavin synthase complex"/>
    <property type="evidence" value="ECO:0007669"/>
    <property type="project" value="InterPro"/>
</dbReference>
<dbReference type="GO" id="GO:0000906">
    <property type="term" value="F:6,7-dimethyl-8-ribityllumazine synthase activity"/>
    <property type="evidence" value="ECO:0007669"/>
    <property type="project" value="UniProtKB-UniRule"/>
</dbReference>
<dbReference type="GO" id="GO:0009231">
    <property type="term" value="P:riboflavin biosynthetic process"/>
    <property type="evidence" value="ECO:0007669"/>
    <property type="project" value="UniProtKB-UniRule"/>
</dbReference>
<dbReference type="CDD" id="cd09209">
    <property type="entry name" value="Lumazine_synthase-I"/>
    <property type="match status" value="1"/>
</dbReference>
<dbReference type="Gene3D" id="3.40.50.960">
    <property type="entry name" value="Lumazine/riboflavin synthase"/>
    <property type="match status" value="1"/>
</dbReference>
<dbReference type="HAMAP" id="MF_00178">
    <property type="entry name" value="Lumazine_synth"/>
    <property type="match status" value="1"/>
</dbReference>
<dbReference type="InterPro" id="IPR034964">
    <property type="entry name" value="LS"/>
</dbReference>
<dbReference type="InterPro" id="IPR002180">
    <property type="entry name" value="LS/RS"/>
</dbReference>
<dbReference type="InterPro" id="IPR036467">
    <property type="entry name" value="LS/RS_sf"/>
</dbReference>
<dbReference type="NCBIfam" id="TIGR00114">
    <property type="entry name" value="lumazine-synth"/>
    <property type="match status" value="1"/>
</dbReference>
<dbReference type="PANTHER" id="PTHR21058:SF0">
    <property type="entry name" value="6,7-DIMETHYL-8-RIBITYLLUMAZINE SYNTHASE"/>
    <property type="match status" value="1"/>
</dbReference>
<dbReference type="PANTHER" id="PTHR21058">
    <property type="entry name" value="6,7-DIMETHYL-8-RIBITYLLUMAZINE SYNTHASE DMRL SYNTHASE LUMAZINE SYNTHASE"/>
    <property type="match status" value="1"/>
</dbReference>
<dbReference type="Pfam" id="PF00885">
    <property type="entry name" value="DMRL_synthase"/>
    <property type="match status" value="1"/>
</dbReference>
<dbReference type="SUPFAM" id="SSF52121">
    <property type="entry name" value="Lumazine synthase"/>
    <property type="match status" value="1"/>
</dbReference>
<sequence length="173" mass="17876">MVSQRRDADAPKDSPKSILESLAGTRVLVVEARYYDDIADELLAGARAAIEAVGAEARVFTVPGALEIPAAIAILMDAGRKAGGPYDAAVALGCVIRGETGHYDIVAGESARALMDLSVAEHLPLGNGILTVETMEQALARARVSDMNKGGGAAEAALSLLAIKRAANLEPAR</sequence>
<feature type="chain" id="PRO_1000195496" description="6,7-dimethyl-8-ribityllumazine synthase">
    <location>
        <begin position="1"/>
        <end position="173"/>
    </location>
</feature>
<feature type="active site" description="Proton donor" evidence="1">
    <location>
        <position position="102"/>
    </location>
</feature>
<feature type="binding site" evidence="1">
    <location>
        <position position="34"/>
    </location>
    <ligand>
        <name>5-amino-6-(D-ribitylamino)uracil</name>
        <dbReference type="ChEBI" id="CHEBI:15934"/>
    </ligand>
</feature>
<feature type="binding site" evidence="1">
    <location>
        <begin position="65"/>
        <end position="67"/>
    </location>
    <ligand>
        <name>5-amino-6-(D-ribitylamino)uracil</name>
        <dbReference type="ChEBI" id="CHEBI:15934"/>
    </ligand>
</feature>
<feature type="binding site" evidence="1">
    <location>
        <begin position="94"/>
        <end position="96"/>
    </location>
    <ligand>
        <name>5-amino-6-(D-ribitylamino)uracil</name>
        <dbReference type="ChEBI" id="CHEBI:15934"/>
    </ligand>
</feature>
<feature type="binding site" evidence="1">
    <location>
        <begin position="99"/>
        <end position="100"/>
    </location>
    <ligand>
        <name>(2S)-2-hydroxy-3-oxobutyl phosphate</name>
        <dbReference type="ChEBI" id="CHEBI:58830"/>
    </ligand>
</feature>
<feature type="binding site" evidence="1">
    <location>
        <position position="127"/>
    </location>
    <ligand>
        <name>5-amino-6-(D-ribitylamino)uracil</name>
        <dbReference type="ChEBI" id="CHEBI:15934"/>
    </ligand>
</feature>
<feature type="binding site" evidence="1">
    <location>
        <position position="141"/>
    </location>
    <ligand>
        <name>(2S)-2-hydroxy-3-oxobutyl phosphate</name>
        <dbReference type="ChEBI" id="CHEBI:58830"/>
    </ligand>
</feature>
<evidence type="ECO:0000255" key="1">
    <source>
        <dbReference type="HAMAP-Rule" id="MF_00178"/>
    </source>
</evidence>